<proteinExistence type="inferred from homology"/>
<organism>
    <name type="scientific">Maridesulfovibrio salexigens (strain ATCC 14822 / DSM 2638 / NCIMB 8403 / VKM B-1763)</name>
    <name type="common">Desulfovibrio salexigens</name>
    <dbReference type="NCBI Taxonomy" id="526222"/>
    <lineage>
        <taxon>Bacteria</taxon>
        <taxon>Pseudomonadati</taxon>
        <taxon>Thermodesulfobacteriota</taxon>
        <taxon>Desulfovibrionia</taxon>
        <taxon>Desulfovibrionales</taxon>
        <taxon>Desulfovibrionaceae</taxon>
        <taxon>Maridesulfovibrio</taxon>
    </lineage>
</organism>
<sequence>MDVSIDFAGLKLKNPILTASGTFGFGLEFQRYGDLESLGGIVVKGLSLKPREGNPMPRIAETPCGMLNAIGIQNPGVEEFINKKLPKLPWKTLPVLANLYATDAEEFGELAGVLAGEEGVAALEVNVSCPNVKEGGIAFGQDPKQITKVAEAVKKNAGNKPIIIKLSPNVTDITVCAKAAEDGGADALSLINTLSGMAVDIERRTPRLANVIGGLSGPAVKPVALRCVYQTVNAVKIPVMGLGGITTAEDAAEFLLVGAKAVQIGTGNFLSPDTAFRIAEELPKVLERVKAESLDEFIGSLKLPK</sequence>
<evidence type="ECO:0000250" key="1"/>
<evidence type="ECO:0000305" key="2"/>
<gene>
    <name type="primary">pyrD</name>
    <name type="ordered locus">Desal_2157</name>
</gene>
<protein>
    <recommendedName>
        <fullName>Dihydroorotate dehydrogenase B (NAD(+)), catalytic subunit</fullName>
        <shortName>DHOD B</shortName>
        <shortName>DHODase B</shortName>
        <shortName>DHOdehase B</shortName>
        <ecNumber>1.3.1.14</ecNumber>
    </recommendedName>
    <alternativeName>
        <fullName>Dihydroorotate oxidase B</fullName>
    </alternativeName>
    <alternativeName>
        <fullName>Orotate reductase (NADH)</fullName>
    </alternativeName>
</protein>
<accession>C6BW12</accession>
<keyword id="KW-0963">Cytoplasm</keyword>
<keyword id="KW-0285">Flavoprotein</keyword>
<keyword id="KW-0288">FMN</keyword>
<keyword id="KW-0520">NAD</keyword>
<keyword id="KW-0560">Oxidoreductase</keyword>
<keyword id="KW-0665">Pyrimidine biosynthesis</keyword>
<keyword id="KW-1185">Reference proteome</keyword>
<reference key="1">
    <citation type="submission" date="2009-06" db="EMBL/GenBank/DDBJ databases">
        <title>Complete sequence of Desulfovibrio salexigens DSM 2638.</title>
        <authorList>
            <consortium name="US DOE Joint Genome Institute"/>
            <person name="Lucas S."/>
            <person name="Copeland A."/>
            <person name="Lapidus A."/>
            <person name="Glavina del Rio T."/>
            <person name="Tice H."/>
            <person name="Bruce D."/>
            <person name="Goodwin L."/>
            <person name="Pitluck S."/>
            <person name="Munk A.C."/>
            <person name="Brettin T."/>
            <person name="Detter J.C."/>
            <person name="Han C."/>
            <person name="Tapia R."/>
            <person name="Larimer F."/>
            <person name="Land M."/>
            <person name="Hauser L."/>
            <person name="Kyrpides N."/>
            <person name="Anderson I."/>
            <person name="Wall J.D."/>
            <person name="Arkin A.P."/>
            <person name="Dehal P."/>
            <person name="Chivian D."/>
            <person name="Giles B."/>
            <person name="Hazen T.C."/>
        </authorList>
    </citation>
    <scope>NUCLEOTIDE SEQUENCE [LARGE SCALE GENOMIC DNA]</scope>
    <source>
        <strain>ATCC 14822 / DSM 2638 / NCIMB 8403 / VKM B-1763</strain>
    </source>
</reference>
<name>PYRDB_MARSD</name>
<dbReference type="EC" id="1.3.1.14"/>
<dbReference type="EMBL" id="CP001649">
    <property type="protein sequence ID" value="ACS80215.1"/>
    <property type="molecule type" value="Genomic_DNA"/>
</dbReference>
<dbReference type="RefSeq" id="WP_015852031.1">
    <property type="nucleotide sequence ID" value="NC_012881.1"/>
</dbReference>
<dbReference type="SMR" id="C6BW12"/>
<dbReference type="STRING" id="526222.Desal_2157"/>
<dbReference type="KEGG" id="dsa:Desal_2157"/>
<dbReference type="eggNOG" id="COG0167">
    <property type="taxonomic scope" value="Bacteria"/>
</dbReference>
<dbReference type="HOGENOM" id="CLU_042042_0_0_7"/>
<dbReference type="OrthoDB" id="9802377at2"/>
<dbReference type="UniPathway" id="UPA00070">
    <property type="reaction ID" value="UER00945"/>
</dbReference>
<dbReference type="Proteomes" id="UP000002601">
    <property type="component" value="Chromosome"/>
</dbReference>
<dbReference type="GO" id="GO:0005737">
    <property type="term" value="C:cytoplasm"/>
    <property type="evidence" value="ECO:0007669"/>
    <property type="project" value="UniProtKB-SubCell"/>
</dbReference>
<dbReference type="GO" id="GO:0004589">
    <property type="term" value="F:dihydroorotate dehydrogenase (NAD+) activity"/>
    <property type="evidence" value="ECO:0007669"/>
    <property type="project" value="UniProtKB-EC"/>
</dbReference>
<dbReference type="GO" id="GO:0006207">
    <property type="term" value="P:'de novo' pyrimidine nucleobase biosynthetic process"/>
    <property type="evidence" value="ECO:0007669"/>
    <property type="project" value="InterPro"/>
</dbReference>
<dbReference type="GO" id="GO:0044205">
    <property type="term" value="P:'de novo' UMP biosynthetic process"/>
    <property type="evidence" value="ECO:0007669"/>
    <property type="project" value="UniProtKB-UniRule"/>
</dbReference>
<dbReference type="CDD" id="cd04740">
    <property type="entry name" value="DHOD_1B_like"/>
    <property type="match status" value="1"/>
</dbReference>
<dbReference type="FunFam" id="3.20.20.70:FF:000027">
    <property type="entry name" value="Dihydropyrimidine dehydrogenase [NADP(+)]"/>
    <property type="match status" value="1"/>
</dbReference>
<dbReference type="Gene3D" id="3.20.20.70">
    <property type="entry name" value="Aldolase class I"/>
    <property type="match status" value="1"/>
</dbReference>
<dbReference type="HAMAP" id="MF_00224">
    <property type="entry name" value="DHO_dh_type1"/>
    <property type="match status" value="1"/>
</dbReference>
<dbReference type="InterPro" id="IPR013785">
    <property type="entry name" value="Aldolase_TIM"/>
</dbReference>
<dbReference type="InterPro" id="IPR050074">
    <property type="entry name" value="DHO_dehydrogenase"/>
</dbReference>
<dbReference type="InterPro" id="IPR033888">
    <property type="entry name" value="DHOD_1B"/>
</dbReference>
<dbReference type="InterPro" id="IPR024920">
    <property type="entry name" value="Dihydroorotate_DH_1"/>
</dbReference>
<dbReference type="InterPro" id="IPR012135">
    <property type="entry name" value="Dihydroorotate_DH_1_2"/>
</dbReference>
<dbReference type="InterPro" id="IPR005720">
    <property type="entry name" value="Dihydroorotate_DH_cat"/>
</dbReference>
<dbReference type="InterPro" id="IPR001295">
    <property type="entry name" value="Dihydroorotate_DH_CS"/>
</dbReference>
<dbReference type="InterPro" id="IPR049622">
    <property type="entry name" value="Dihydroorotate_DH_I"/>
</dbReference>
<dbReference type="NCBIfam" id="NF005574">
    <property type="entry name" value="PRK07259.1"/>
    <property type="match status" value="1"/>
</dbReference>
<dbReference type="NCBIfam" id="TIGR01037">
    <property type="entry name" value="pyrD_sub1_fam"/>
    <property type="match status" value="1"/>
</dbReference>
<dbReference type="PANTHER" id="PTHR48109:SF1">
    <property type="entry name" value="DIHYDROOROTATE DEHYDROGENASE (FUMARATE)"/>
    <property type="match status" value="1"/>
</dbReference>
<dbReference type="PANTHER" id="PTHR48109">
    <property type="entry name" value="DIHYDROOROTATE DEHYDROGENASE (QUINONE), MITOCHONDRIAL-RELATED"/>
    <property type="match status" value="1"/>
</dbReference>
<dbReference type="Pfam" id="PF01180">
    <property type="entry name" value="DHO_dh"/>
    <property type="match status" value="1"/>
</dbReference>
<dbReference type="PIRSF" id="PIRSF000164">
    <property type="entry name" value="DHO_oxidase"/>
    <property type="match status" value="1"/>
</dbReference>
<dbReference type="SUPFAM" id="SSF51395">
    <property type="entry name" value="FMN-linked oxidoreductases"/>
    <property type="match status" value="1"/>
</dbReference>
<dbReference type="PROSITE" id="PS00911">
    <property type="entry name" value="DHODEHASE_1"/>
    <property type="match status" value="1"/>
</dbReference>
<dbReference type="PROSITE" id="PS00912">
    <property type="entry name" value="DHODEHASE_2"/>
    <property type="match status" value="1"/>
</dbReference>
<comment type="function">
    <text evidence="1">Catalyzes the conversion of dihydroorotate to orotate with NAD(+) as electron acceptor.</text>
</comment>
<comment type="catalytic activity">
    <reaction>
        <text>(S)-dihydroorotate + NAD(+) = orotate + NADH + H(+)</text>
        <dbReference type="Rhea" id="RHEA:13513"/>
        <dbReference type="ChEBI" id="CHEBI:15378"/>
        <dbReference type="ChEBI" id="CHEBI:30839"/>
        <dbReference type="ChEBI" id="CHEBI:30864"/>
        <dbReference type="ChEBI" id="CHEBI:57540"/>
        <dbReference type="ChEBI" id="CHEBI:57945"/>
        <dbReference type="EC" id="1.3.1.14"/>
    </reaction>
</comment>
<comment type="cofactor">
    <cofactor evidence="1">
        <name>FMN</name>
        <dbReference type="ChEBI" id="CHEBI:58210"/>
    </cofactor>
    <text evidence="1">Binds 1 FMN per subunit.</text>
</comment>
<comment type="pathway">
    <text>Pyrimidine metabolism; UMP biosynthesis via de novo pathway; orotate from (S)-dihydroorotate (NAD(+) route): step 1/1.</text>
</comment>
<comment type="subunit">
    <text evidence="1">Heterotetramer of 2 PyrK and 2 PyrD type B subunits.</text>
</comment>
<comment type="subcellular location">
    <subcellularLocation>
        <location evidence="1">Cytoplasm</location>
    </subcellularLocation>
</comment>
<comment type="similarity">
    <text evidence="2">Belongs to the dihydroorotate dehydrogenase family. Type 1 subfamily.</text>
</comment>
<feature type="chain" id="PRO_1000204303" description="Dihydroorotate dehydrogenase B (NAD(+)), catalytic subunit">
    <location>
        <begin position="1"/>
        <end position="305"/>
    </location>
</feature>
<feature type="active site" description="Nucleophile">
    <location>
        <position position="129"/>
    </location>
</feature>
<feature type="binding site" evidence="1">
    <location>
        <position position="20"/>
    </location>
    <ligand>
        <name>FMN</name>
        <dbReference type="ChEBI" id="CHEBI:58210"/>
    </ligand>
</feature>
<feature type="binding site" evidence="1">
    <location>
        <begin position="44"/>
        <end position="45"/>
    </location>
    <ligand>
        <name>FMN</name>
        <dbReference type="ChEBI" id="CHEBI:58210"/>
    </ligand>
</feature>
<feature type="binding site" evidence="1">
    <location>
        <position position="44"/>
    </location>
    <ligand>
        <name>substrate</name>
    </ligand>
</feature>
<feature type="binding site" evidence="1">
    <location>
        <begin position="68"/>
        <end position="72"/>
    </location>
    <ligand>
        <name>substrate</name>
    </ligand>
</feature>
<feature type="binding site" evidence="1">
    <location>
        <position position="98"/>
    </location>
    <ligand>
        <name>FMN</name>
        <dbReference type="ChEBI" id="CHEBI:58210"/>
    </ligand>
</feature>
<feature type="binding site" evidence="1">
    <location>
        <position position="126"/>
    </location>
    <ligand>
        <name>FMN</name>
        <dbReference type="ChEBI" id="CHEBI:58210"/>
    </ligand>
</feature>
<feature type="binding site" evidence="1">
    <location>
        <position position="126"/>
    </location>
    <ligand>
        <name>substrate</name>
    </ligand>
</feature>
<feature type="binding site" evidence="1">
    <location>
        <position position="165"/>
    </location>
    <ligand>
        <name>FMN</name>
        <dbReference type="ChEBI" id="CHEBI:58210"/>
    </ligand>
</feature>
<feature type="binding site" evidence="1">
    <location>
        <position position="191"/>
    </location>
    <ligand>
        <name>FMN</name>
        <dbReference type="ChEBI" id="CHEBI:58210"/>
    </ligand>
</feature>
<feature type="binding site" evidence="1">
    <location>
        <begin position="192"/>
        <end position="193"/>
    </location>
    <ligand>
        <name>substrate</name>
    </ligand>
</feature>
<feature type="binding site" evidence="1">
    <location>
        <position position="217"/>
    </location>
    <ligand>
        <name>FMN</name>
        <dbReference type="ChEBI" id="CHEBI:58210"/>
    </ligand>
</feature>
<feature type="binding site" evidence="1">
    <location>
        <begin position="243"/>
        <end position="244"/>
    </location>
    <ligand>
        <name>FMN</name>
        <dbReference type="ChEBI" id="CHEBI:58210"/>
    </ligand>
</feature>
<feature type="binding site" evidence="1">
    <location>
        <begin position="265"/>
        <end position="266"/>
    </location>
    <ligand>
        <name>FMN</name>
        <dbReference type="ChEBI" id="CHEBI:58210"/>
    </ligand>
</feature>